<accession>Q8FQ19</accession>
<gene>
    <name evidence="1" type="primary">atpC</name>
    <name type="ordered locus">CE1316</name>
</gene>
<comment type="function">
    <text evidence="1">Produces ATP from ADP in the presence of a proton gradient across the membrane.</text>
</comment>
<comment type="subunit">
    <text>F-type ATPases have 2 components, CF(1) - the catalytic core - and CF(0) - the membrane proton channel. CF(1) has five subunits: alpha(3), beta(3), gamma(1), delta(1), epsilon(1). CF(0) has three main subunits: a, b and c.</text>
</comment>
<comment type="subcellular location">
    <subcellularLocation>
        <location evidence="1">Cell membrane</location>
        <topology evidence="1">Peripheral membrane protein</topology>
    </subcellularLocation>
</comment>
<comment type="similarity">
    <text evidence="1">Belongs to the ATPase epsilon chain family.</text>
</comment>
<organism>
    <name type="scientific">Corynebacterium efficiens (strain DSM 44549 / YS-314 / AJ 12310 / JCM 11189 / NBRC 100395)</name>
    <dbReference type="NCBI Taxonomy" id="196164"/>
    <lineage>
        <taxon>Bacteria</taxon>
        <taxon>Bacillati</taxon>
        <taxon>Actinomycetota</taxon>
        <taxon>Actinomycetes</taxon>
        <taxon>Mycobacteriales</taxon>
        <taxon>Corynebacteriaceae</taxon>
        <taxon>Corynebacterium</taxon>
    </lineage>
</organism>
<sequence>MAEITVELVSVERMLWSGQASIVTAQTTEGEIGVLPDHEPMLGQLVENGVVTIQPTDGDRLVAGVQGGFLSVSKEKVTILADFAVWAHEVDSASAEADLNSDDELAKARAEAGLRAVRRSSEGL</sequence>
<keyword id="KW-0066">ATP synthesis</keyword>
<keyword id="KW-1003">Cell membrane</keyword>
<keyword id="KW-0139">CF(1)</keyword>
<keyword id="KW-0375">Hydrogen ion transport</keyword>
<keyword id="KW-0406">Ion transport</keyword>
<keyword id="KW-0472">Membrane</keyword>
<keyword id="KW-1185">Reference proteome</keyword>
<keyword id="KW-0813">Transport</keyword>
<dbReference type="EMBL" id="BA000035">
    <property type="protein sequence ID" value="BAC18126.1"/>
    <property type="molecule type" value="Genomic_DNA"/>
</dbReference>
<dbReference type="RefSeq" id="WP_006769277.1">
    <property type="nucleotide sequence ID" value="NC_004369.1"/>
</dbReference>
<dbReference type="SMR" id="Q8FQ19"/>
<dbReference type="STRING" id="196164.gene:10741725"/>
<dbReference type="KEGG" id="cef:CE1316"/>
<dbReference type="eggNOG" id="COG0355">
    <property type="taxonomic scope" value="Bacteria"/>
</dbReference>
<dbReference type="HOGENOM" id="CLU_084338_4_0_11"/>
<dbReference type="OrthoDB" id="9791445at2"/>
<dbReference type="Proteomes" id="UP000001409">
    <property type="component" value="Chromosome"/>
</dbReference>
<dbReference type="GO" id="GO:0005886">
    <property type="term" value="C:plasma membrane"/>
    <property type="evidence" value="ECO:0007669"/>
    <property type="project" value="UniProtKB-SubCell"/>
</dbReference>
<dbReference type="GO" id="GO:0045259">
    <property type="term" value="C:proton-transporting ATP synthase complex"/>
    <property type="evidence" value="ECO:0007669"/>
    <property type="project" value="UniProtKB-KW"/>
</dbReference>
<dbReference type="GO" id="GO:0005524">
    <property type="term" value="F:ATP binding"/>
    <property type="evidence" value="ECO:0007669"/>
    <property type="project" value="UniProtKB-UniRule"/>
</dbReference>
<dbReference type="GO" id="GO:0046933">
    <property type="term" value="F:proton-transporting ATP synthase activity, rotational mechanism"/>
    <property type="evidence" value="ECO:0007669"/>
    <property type="project" value="UniProtKB-UniRule"/>
</dbReference>
<dbReference type="CDD" id="cd12152">
    <property type="entry name" value="F1-ATPase_delta"/>
    <property type="match status" value="1"/>
</dbReference>
<dbReference type="Gene3D" id="2.60.15.10">
    <property type="entry name" value="F0F1 ATP synthase delta/epsilon subunit, N-terminal"/>
    <property type="match status" value="1"/>
</dbReference>
<dbReference type="HAMAP" id="MF_00530">
    <property type="entry name" value="ATP_synth_epsil_bac"/>
    <property type="match status" value="1"/>
</dbReference>
<dbReference type="InterPro" id="IPR001469">
    <property type="entry name" value="ATP_synth_F1_dsu/esu"/>
</dbReference>
<dbReference type="InterPro" id="IPR020546">
    <property type="entry name" value="ATP_synth_F1_dsu/esu_N"/>
</dbReference>
<dbReference type="InterPro" id="IPR036771">
    <property type="entry name" value="ATPsynth_dsu/esu_N"/>
</dbReference>
<dbReference type="NCBIfam" id="TIGR01216">
    <property type="entry name" value="ATP_synt_epsi"/>
    <property type="match status" value="1"/>
</dbReference>
<dbReference type="NCBIfam" id="NF001852">
    <property type="entry name" value="PRK00571.2-5"/>
    <property type="match status" value="1"/>
</dbReference>
<dbReference type="NCBIfam" id="NF009977">
    <property type="entry name" value="PRK13442.1"/>
    <property type="match status" value="1"/>
</dbReference>
<dbReference type="PANTHER" id="PTHR13822">
    <property type="entry name" value="ATP SYNTHASE DELTA/EPSILON CHAIN"/>
    <property type="match status" value="1"/>
</dbReference>
<dbReference type="PANTHER" id="PTHR13822:SF10">
    <property type="entry name" value="ATP SYNTHASE EPSILON CHAIN, CHLOROPLASTIC"/>
    <property type="match status" value="1"/>
</dbReference>
<dbReference type="Pfam" id="PF02823">
    <property type="entry name" value="ATP-synt_DE_N"/>
    <property type="match status" value="1"/>
</dbReference>
<dbReference type="SUPFAM" id="SSF51344">
    <property type="entry name" value="Epsilon subunit of F1F0-ATP synthase N-terminal domain"/>
    <property type="match status" value="1"/>
</dbReference>
<reference key="1">
    <citation type="journal article" date="2003" name="Genome Res.">
        <title>Comparative complete genome sequence analysis of the amino acid replacements responsible for the thermostability of Corynebacterium efficiens.</title>
        <authorList>
            <person name="Nishio Y."/>
            <person name="Nakamura Y."/>
            <person name="Kawarabayasi Y."/>
            <person name="Usuda Y."/>
            <person name="Kimura E."/>
            <person name="Sugimoto S."/>
            <person name="Matsui K."/>
            <person name="Yamagishi A."/>
            <person name="Kikuchi H."/>
            <person name="Ikeo K."/>
            <person name="Gojobori T."/>
        </authorList>
    </citation>
    <scope>NUCLEOTIDE SEQUENCE [LARGE SCALE GENOMIC DNA]</scope>
    <source>
        <strain>DSM 44549 / YS-314 / AJ 12310 / JCM 11189 / NBRC 100395</strain>
    </source>
</reference>
<feature type="chain" id="PRO_0000188126" description="ATP synthase epsilon chain">
    <location>
        <begin position="1"/>
        <end position="124"/>
    </location>
</feature>
<protein>
    <recommendedName>
        <fullName evidence="1">ATP synthase epsilon chain</fullName>
    </recommendedName>
    <alternativeName>
        <fullName evidence="1">ATP synthase F1 sector epsilon subunit</fullName>
    </alternativeName>
    <alternativeName>
        <fullName evidence="1">F-ATPase epsilon subunit</fullName>
    </alternativeName>
</protein>
<proteinExistence type="inferred from homology"/>
<evidence type="ECO:0000255" key="1">
    <source>
        <dbReference type="HAMAP-Rule" id="MF_00530"/>
    </source>
</evidence>
<name>ATPE_COREF</name>